<dbReference type="EMBL" id="CP000316">
    <property type="protein sequence ID" value="ABE43534.1"/>
    <property type="molecule type" value="Genomic_DNA"/>
</dbReference>
<dbReference type="RefSeq" id="WP_011482533.1">
    <property type="nucleotide sequence ID" value="NC_007948.1"/>
</dbReference>
<dbReference type="SMR" id="Q12D58"/>
<dbReference type="STRING" id="296591.Bpro_1596"/>
<dbReference type="KEGG" id="pol:Bpro_1596"/>
<dbReference type="eggNOG" id="COG1666">
    <property type="taxonomic scope" value="Bacteria"/>
</dbReference>
<dbReference type="HOGENOM" id="CLU_099839_1_0_4"/>
<dbReference type="OrthoDB" id="9801447at2"/>
<dbReference type="Proteomes" id="UP000001983">
    <property type="component" value="Chromosome"/>
</dbReference>
<dbReference type="GO" id="GO:0005829">
    <property type="term" value="C:cytosol"/>
    <property type="evidence" value="ECO:0007669"/>
    <property type="project" value="TreeGrafter"/>
</dbReference>
<dbReference type="GO" id="GO:0000166">
    <property type="term" value="F:nucleotide binding"/>
    <property type="evidence" value="ECO:0007669"/>
    <property type="project" value="TreeGrafter"/>
</dbReference>
<dbReference type="CDD" id="cd11740">
    <property type="entry name" value="YajQ_like"/>
    <property type="match status" value="1"/>
</dbReference>
<dbReference type="Gene3D" id="3.30.70.990">
    <property type="entry name" value="YajQ-like, domain 2"/>
    <property type="match status" value="1"/>
</dbReference>
<dbReference type="HAMAP" id="MF_00632">
    <property type="entry name" value="YajQ"/>
    <property type="match status" value="1"/>
</dbReference>
<dbReference type="InterPro" id="IPR007551">
    <property type="entry name" value="DUF520"/>
</dbReference>
<dbReference type="InterPro" id="IPR035570">
    <property type="entry name" value="UPF0234_N"/>
</dbReference>
<dbReference type="InterPro" id="IPR036183">
    <property type="entry name" value="YajQ-like_sf"/>
</dbReference>
<dbReference type="NCBIfam" id="NF003819">
    <property type="entry name" value="PRK05412.1"/>
    <property type="match status" value="1"/>
</dbReference>
<dbReference type="PANTHER" id="PTHR30476">
    <property type="entry name" value="UPF0234 PROTEIN YAJQ"/>
    <property type="match status" value="1"/>
</dbReference>
<dbReference type="PANTHER" id="PTHR30476:SF0">
    <property type="entry name" value="UPF0234 PROTEIN YAJQ"/>
    <property type="match status" value="1"/>
</dbReference>
<dbReference type="Pfam" id="PF04461">
    <property type="entry name" value="DUF520"/>
    <property type="match status" value="1"/>
</dbReference>
<dbReference type="SUPFAM" id="SSF89963">
    <property type="entry name" value="YajQ-like"/>
    <property type="match status" value="2"/>
</dbReference>
<sequence>MPSFDTVLETDMVKVKNAVENTSKEIGTRFDFKGTAASIELKDKDITLVGDSDFQIDQINDVLRNKLTKAGVDIRFLDVGKIEKIGGDKVKQVTKVRDGIETEQAKKIQQLIKGSKMKVQAAIQEGKVRVTGAKRDDLQAAMALIRADMKDLPLSFDNFRD</sequence>
<feature type="chain" id="PRO_0000261958" description="Nucleotide-binding protein Bpro_1596">
    <location>
        <begin position="1"/>
        <end position="161"/>
    </location>
</feature>
<accession>Q12D58</accession>
<protein>
    <recommendedName>
        <fullName evidence="1">Nucleotide-binding protein Bpro_1596</fullName>
    </recommendedName>
</protein>
<proteinExistence type="inferred from homology"/>
<organism>
    <name type="scientific">Polaromonas sp. (strain JS666 / ATCC BAA-500)</name>
    <dbReference type="NCBI Taxonomy" id="296591"/>
    <lineage>
        <taxon>Bacteria</taxon>
        <taxon>Pseudomonadati</taxon>
        <taxon>Pseudomonadota</taxon>
        <taxon>Betaproteobacteria</taxon>
        <taxon>Burkholderiales</taxon>
        <taxon>Comamonadaceae</taxon>
        <taxon>Polaromonas</taxon>
    </lineage>
</organism>
<name>Y1596_POLSJ</name>
<reference key="1">
    <citation type="journal article" date="2008" name="Appl. Environ. Microbiol.">
        <title>The genome of Polaromonas sp. strain JS666: insights into the evolution of a hydrocarbon- and xenobiotic-degrading bacterium, and features of relevance to biotechnology.</title>
        <authorList>
            <person name="Mattes T.E."/>
            <person name="Alexander A.K."/>
            <person name="Richardson P.M."/>
            <person name="Munk A.C."/>
            <person name="Han C.S."/>
            <person name="Stothard P."/>
            <person name="Coleman N.V."/>
        </authorList>
    </citation>
    <scope>NUCLEOTIDE SEQUENCE [LARGE SCALE GENOMIC DNA]</scope>
    <source>
        <strain>JS666 / ATCC BAA-500</strain>
    </source>
</reference>
<comment type="function">
    <text evidence="1">Nucleotide-binding protein.</text>
</comment>
<comment type="similarity">
    <text evidence="1">Belongs to the YajQ family.</text>
</comment>
<gene>
    <name type="ordered locus">Bpro_1596</name>
</gene>
<keyword id="KW-0547">Nucleotide-binding</keyword>
<keyword id="KW-1185">Reference proteome</keyword>
<evidence type="ECO:0000255" key="1">
    <source>
        <dbReference type="HAMAP-Rule" id="MF_00632"/>
    </source>
</evidence>